<accession>Q7U1K4</accession>
<accession>A0A1R3XY29</accession>
<accession>X2BFG4</accession>
<comment type="similarity">
    <text evidence="1">Belongs to the UPF0336 family.</text>
</comment>
<evidence type="ECO:0000255" key="1">
    <source>
        <dbReference type="HAMAP-Rule" id="MF_00799"/>
    </source>
</evidence>
<organism>
    <name type="scientific">Mycobacterium bovis (strain ATCC BAA-935 / AF2122/97)</name>
    <dbReference type="NCBI Taxonomy" id="233413"/>
    <lineage>
        <taxon>Bacteria</taxon>
        <taxon>Bacillati</taxon>
        <taxon>Actinomycetota</taxon>
        <taxon>Actinomycetes</taxon>
        <taxon>Mycobacteriales</taxon>
        <taxon>Mycobacteriaceae</taxon>
        <taxon>Mycobacterium</taxon>
        <taxon>Mycobacterium tuberculosis complex</taxon>
    </lineage>
</organism>
<proteinExistence type="inferred from homology"/>
<dbReference type="EMBL" id="LT708304">
    <property type="protein sequence ID" value="SIT99252.1"/>
    <property type="molecule type" value="Genomic_DNA"/>
</dbReference>
<dbReference type="RefSeq" id="NP_854312.1">
    <property type="nucleotide sequence ID" value="NC_002945.3"/>
</dbReference>
<dbReference type="SMR" id="Q7U1K4"/>
<dbReference type="KEGG" id="mbo:BQ2027_MB0654"/>
<dbReference type="PATRIC" id="fig|233413.5.peg.714"/>
<dbReference type="Proteomes" id="UP000001419">
    <property type="component" value="Chromosome"/>
</dbReference>
<dbReference type="GO" id="GO:0019171">
    <property type="term" value="F:(3R)-hydroxyacyl-[acyl-carrier-protein] dehydratase activity"/>
    <property type="evidence" value="ECO:0007669"/>
    <property type="project" value="TreeGrafter"/>
</dbReference>
<dbReference type="GO" id="GO:0006633">
    <property type="term" value="P:fatty acid biosynthetic process"/>
    <property type="evidence" value="ECO:0007669"/>
    <property type="project" value="TreeGrafter"/>
</dbReference>
<dbReference type="CDD" id="cd03441">
    <property type="entry name" value="R_hydratase_like"/>
    <property type="match status" value="1"/>
</dbReference>
<dbReference type="Gene3D" id="3.10.129.10">
    <property type="entry name" value="Hotdog Thioesterase"/>
    <property type="match status" value="1"/>
</dbReference>
<dbReference type="HAMAP" id="MF_00799">
    <property type="entry name" value="UPF0336"/>
    <property type="match status" value="1"/>
</dbReference>
<dbReference type="InterPro" id="IPR039569">
    <property type="entry name" value="FAS1-like_DH_region"/>
</dbReference>
<dbReference type="InterPro" id="IPR016709">
    <property type="entry name" value="HadA-like"/>
</dbReference>
<dbReference type="InterPro" id="IPR029069">
    <property type="entry name" value="HotDog_dom_sf"/>
</dbReference>
<dbReference type="InterPro" id="IPR050965">
    <property type="entry name" value="UPF0336/Enoyl-CoA_hydratase"/>
</dbReference>
<dbReference type="InterPro" id="IPR054849">
    <property type="entry name" value="UPF0336_fam"/>
</dbReference>
<dbReference type="NCBIfam" id="NF040624">
    <property type="entry name" value="HadA"/>
    <property type="match status" value="1"/>
</dbReference>
<dbReference type="NCBIfam" id="NF010245">
    <property type="entry name" value="PRK13692.1"/>
    <property type="match status" value="1"/>
</dbReference>
<dbReference type="PANTHER" id="PTHR43437:SF3">
    <property type="entry name" value="HYDROXYACYL-THIOESTER DEHYDRATASE TYPE 2, MITOCHONDRIAL"/>
    <property type="match status" value="1"/>
</dbReference>
<dbReference type="PANTHER" id="PTHR43437">
    <property type="entry name" value="HYDROXYACYL-THIOESTER DEHYDRATASE TYPE 2, MITOCHONDRIAL-RELATED"/>
    <property type="match status" value="1"/>
</dbReference>
<dbReference type="Pfam" id="PF13452">
    <property type="entry name" value="FAS1_DH_region"/>
    <property type="match status" value="1"/>
</dbReference>
<dbReference type="PIRSF" id="PIRSF018072">
    <property type="entry name" value="UCP018072"/>
    <property type="match status" value="1"/>
</dbReference>
<dbReference type="SUPFAM" id="SSF54637">
    <property type="entry name" value="Thioesterase/thiol ester dehydrase-isomerase"/>
    <property type="match status" value="1"/>
</dbReference>
<gene>
    <name type="ordered locus">BQ2027_MB0654</name>
</gene>
<sequence length="158" mass="17481">MALSADIVGMHYRYPDHYEVEREKIREYAVAVQNDDAWYFEEDGAAELGYKGLLAPLTFICVFGYKAQAAFFKHANIATAEAQIVQVDQVLKFEKPIVAGDKLYCDVYVDSVREAHGTQIIVTKNIVTNEEGDLVQETYTTLAGRAGEDGEGFSDGAA</sequence>
<protein>
    <recommendedName>
        <fullName evidence="1">UPF0336 protein Mb0654</fullName>
    </recommendedName>
</protein>
<name>Y654_MYCBO</name>
<feature type="chain" id="PRO_0000216134" description="UPF0336 protein Mb0654">
    <location>
        <begin position="1"/>
        <end position="158"/>
    </location>
</feature>
<reference key="1">
    <citation type="journal article" date="2003" name="Proc. Natl. Acad. Sci. U.S.A.">
        <title>The complete genome sequence of Mycobacterium bovis.</title>
        <authorList>
            <person name="Garnier T."/>
            <person name="Eiglmeier K."/>
            <person name="Camus J.-C."/>
            <person name="Medina N."/>
            <person name="Mansoor H."/>
            <person name="Pryor M."/>
            <person name="Duthoy S."/>
            <person name="Grondin S."/>
            <person name="Lacroix C."/>
            <person name="Monsempe C."/>
            <person name="Simon S."/>
            <person name="Harris B."/>
            <person name="Atkin R."/>
            <person name="Doggett J."/>
            <person name="Mayes R."/>
            <person name="Keating L."/>
            <person name="Wheeler P.R."/>
            <person name="Parkhill J."/>
            <person name="Barrell B.G."/>
            <person name="Cole S.T."/>
            <person name="Gordon S.V."/>
            <person name="Hewinson R.G."/>
        </authorList>
    </citation>
    <scope>NUCLEOTIDE SEQUENCE [LARGE SCALE GENOMIC DNA]</scope>
    <source>
        <strain>ATCC BAA-935 / AF2122/97</strain>
    </source>
</reference>
<reference key="2">
    <citation type="journal article" date="2017" name="Genome Announc.">
        <title>Updated reference genome sequence and annotation of Mycobacterium bovis AF2122/97.</title>
        <authorList>
            <person name="Malone K.M."/>
            <person name="Farrell D."/>
            <person name="Stuber T.P."/>
            <person name="Schubert O.T."/>
            <person name="Aebersold R."/>
            <person name="Robbe-Austerman S."/>
            <person name="Gordon S.V."/>
        </authorList>
    </citation>
    <scope>NUCLEOTIDE SEQUENCE [LARGE SCALE GENOMIC DNA]</scope>
    <scope>GENOME REANNOTATION</scope>
    <source>
        <strain>ATCC BAA-935 / AF2122/97</strain>
    </source>
</reference>
<keyword id="KW-1185">Reference proteome</keyword>